<reference key="1">
    <citation type="journal article" date="2007" name="Proc. Natl. Acad. Sci. U.S.A.">
        <title>Independent sorting-out of thousands of duplicated gene pairs in two yeast species descended from a whole-genome duplication.</title>
        <authorList>
            <person name="Scannell D.R."/>
            <person name="Frank A.C."/>
            <person name="Conant G.C."/>
            <person name="Byrne K.P."/>
            <person name="Woolfit M."/>
            <person name="Wolfe K.H."/>
        </authorList>
    </citation>
    <scope>NUCLEOTIDE SEQUENCE [LARGE SCALE GENOMIC DNA]</scope>
    <source>
        <strain>ATCC 22028 / DSM 70294 / BCRC 21397 / CBS 2163 / NBRC 10782 / NRRL Y-8283 / UCD 57-17</strain>
    </source>
</reference>
<organism>
    <name type="scientific">Vanderwaltozyma polyspora (strain ATCC 22028 / DSM 70294 / BCRC 21397 / CBS 2163 / NBRC 10782 / NRRL Y-8283 / UCD 57-17)</name>
    <name type="common">Kluyveromyces polysporus</name>
    <dbReference type="NCBI Taxonomy" id="436907"/>
    <lineage>
        <taxon>Eukaryota</taxon>
        <taxon>Fungi</taxon>
        <taxon>Dikarya</taxon>
        <taxon>Ascomycota</taxon>
        <taxon>Saccharomycotina</taxon>
        <taxon>Saccharomycetes</taxon>
        <taxon>Saccharomycetales</taxon>
        <taxon>Saccharomycetaceae</taxon>
        <taxon>Vanderwaltozyma</taxon>
    </lineage>
</organism>
<proteinExistence type="inferred from homology"/>
<gene>
    <name evidence="1" type="primary">RPS1</name>
    <name type="ORF">Kpol_1001p12</name>
</gene>
<name>RS3A_VANPO</name>
<sequence>MAVGKNKRLSKGKKGLKKKVVDPFTRKEWFDIKAPSTFENRNVGKTLVNKSTGLKNAADALKGRVVEVCLADLQGSEDHSFRKIKLRVDEVQGKNLLTNFHGMDFTTDKVRSMVRKWQTLIEANVTVKTSDDYVLRVFAIAFTRKQSNQVKRTSYAQSSHIRAIRKVISEILTREVQGSTLAQLTSKLIPEVINKEIENATKDIFPLQNVHIRKVKLLKQPKFDLGSLMALHGEGSGEEKGKKVSGFKDEVLETV</sequence>
<dbReference type="EMBL" id="DS480433">
    <property type="protein sequence ID" value="EDO16100.1"/>
    <property type="molecule type" value="Genomic_DNA"/>
</dbReference>
<dbReference type="RefSeq" id="XP_001643958.1">
    <property type="nucleotide sequence ID" value="XM_001643908.1"/>
</dbReference>
<dbReference type="SMR" id="A7TNP9"/>
<dbReference type="FunCoup" id="A7TNP9">
    <property type="interactions" value="1307"/>
</dbReference>
<dbReference type="STRING" id="436907.A7TNP9"/>
<dbReference type="GeneID" id="5544230"/>
<dbReference type="KEGG" id="vpo:Kpol_1001p12"/>
<dbReference type="eggNOG" id="KOG1628">
    <property type="taxonomic scope" value="Eukaryota"/>
</dbReference>
<dbReference type="HOGENOM" id="CLU_062507_0_0_1"/>
<dbReference type="InParanoid" id="A7TNP9"/>
<dbReference type="OMA" id="TRFKGHE"/>
<dbReference type="OrthoDB" id="9834376at2759"/>
<dbReference type="PhylomeDB" id="A7TNP9"/>
<dbReference type="Proteomes" id="UP000000267">
    <property type="component" value="Unassembled WGS sequence"/>
</dbReference>
<dbReference type="GO" id="GO:0022627">
    <property type="term" value="C:cytosolic small ribosomal subunit"/>
    <property type="evidence" value="ECO:0007669"/>
    <property type="project" value="UniProtKB-UniRule"/>
</dbReference>
<dbReference type="GO" id="GO:0003735">
    <property type="term" value="F:structural constituent of ribosome"/>
    <property type="evidence" value="ECO:0007669"/>
    <property type="project" value="UniProtKB-UniRule"/>
</dbReference>
<dbReference type="GO" id="GO:0006412">
    <property type="term" value="P:translation"/>
    <property type="evidence" value="ECO:0007669"/>
    <property type="project" value="UniProtKB-UniRule"/>
</dbReference>
<dbReference type="HAMAP" id="MF_03122">
    <property type="entry name" value="Ribosomal_eS1_euk"/>
    <property type="match status" value="1"/>
</dbReference>
<dbReference type="InterPro" id="IPR001593">
    <property type="entry name" value="Ribosomal_eS1"/>
</dbReference>
<dbReference type="InterPro" id="IPR018281">
    <property type="entry name" value="Ribosomal_eS1_CS"/>
</dbReference>
<dbReference type="InterPro" id="IPR027500">
    <property type="entry name" value="Ribosomal_eS1_euk"/>
</dbReference>
<dbReference type="PANTHER" id="PTHR11830">
    <property type="entry name" value="40S RIBOSOMAL PROTEIN S3A"/>
    <property type="match status" value="1"/>
</dbReference>
<dbReference type="Pfam" id="PF01015">
    <property type="entry name" value="Ribosomal_S3Ae"/>
    <property type="match status" value="1"/>
</dbReference>
<dbReference type="SMART" id="SM01397">
    <property type="entry name" value="Ribosomal_S3Ae"/>
    <property type="match status" value="1"/>
</dbReference>
<dbReference type="PROSITE" id="PS01191">
    <property type="entry name" value="RIBOSOMAL_S3AE"/>
    <property type="match status" value="1"/>
</dbReference>
<feature type="initiator methionine" description="Removed" evidence="1">
    <location>
        <position position="1"/>
    </location>
</feature>
<feature type="chain" id="PRO_0000389417" description="Small ribosomal subunit protein eS1">
    <location>
        <begin position="2"/>
        <end position="255"/>
    </location>
</feature>
<feature type="modified residue" description="N-acetylalanine; partial" evidence="1">
    <location>
        <position position="2"/>
    </location>
</feature>
<comment type="subunit">
    <text evidence="1">Component of the small ribosomal subunit. Mature ribosomes consist of a small (40S) and a large (60S) subunit. The 40S subunit contains about 33 different proteins and 1 molecule of RNA (18S). The 60S subunit contains about 49 different proteins and 3 molecules of RNA (25S, 5.8S and 5S).</text>
</comment>
<comment type="subcellular location">
    <subcellularLocation>
        <location evidence="1">Cytoplasm</location>
    </subcellularLocation>
</comment>
<comment type="similarity">
    <text evidence="1">Belongs to the eukaryotic ribosomal protein eS1 family.</text>
</comment>
<accession>A7TNP9</accession>
<evidence type="ECO:0000255" key="1">
    <source>
        <dbReference type="HAMAP-Rule" id="MF_03122"/>
    </source>
</evidence>
<evidence type="ECO:0000305" key="2"/>
<keyword id="KW-0007">Acetylation</keyword>
<keyword id="KW-0963">Cytoplasm</keyword>
<keyword id="KW-1185">Reference proteome</keyword>
<keyword id="KW-0687">Ribonucleoprotein</keyword>
<keyword id="KW-0689">Ribosomal protein</keyword>
<protein>
    <recommendedName>
        <fullName evidence="1">Small ribosomal subunit protein eS1</fullName>
    </recommendedName>
    <alternativeName>
        <fullName evidence="2">40S ribosomal protein S1</fullName>
    </alternativeName>
</protein>